<feature type="chain" id="PRO_0000373000" description="Polymerase acidic protein">
    <location>
        <begin position="1"/>
        <end position="716"/>
    </location>
</feature>
<feature type="short sequence motif" description="Nuclear localization signal 1 (NLS1)" evidence="1 2">
    <location>
        <begin position="124"/>
        <end position="139"/>
    </location>
</feature>
<feature type="short sequence motif" description="Nuclear localization signal 2 (NLS2)" evidence="1 2">
    <location>
        <begin position="184"/>
        <end position="247"/>
    </location>
</feature>
<feature type="binding site" evidence="2">
    <location>
        <position position="41"/>
    </location>
    <ligand>
        <name>Mn(2+)</name>
        <dbReference type="ChEBI" id="CHEBI:29035"/>
        <label>1</label>
    </ligand>
</feature>
<feature type="binding site" evidence="2">
    <location>
        <position position="80"/>
    </location>
    <ligand>
        <name>Mn(2+)</name>
        <dbReference type="ChEBI" id="CHEBI:29035"/>
        <label>2</label>
    </ligand>
</feature>
<feature type="binding site" evidence="2">
    <location>
        <position position="108"/>
    </location>
    <ligand>
        <name>Mn(2+)</name>
        <dbReference type="ChEBI" id="CHEBI:29035"/>
        <label>1</label>
    </ligand>
</feature>
<feature type="binding site" evidence="2">
    <location>
        <position position="108"/>
    </location>
    <ligand>
        <name>Mn(2+)</name>
        <dbReference type="ChEBI" id="CHEBI:29035"/>
        <label>2</label>
    </ligand>
</feature>
<feature type="binding site" evidence="2">
    <location>
        <position position="119"/>
    </location>
    <ligand>
        <name>Mn(2+)</name>
        <dbReference type="ChEBI" id="CHEBI:29035"/>
        <label>1</label>
    </ligand>
</feature>
<feature type="binding site" evidence="2">
    <location>
        <position position="120"/>
    </location>
    <ligand>
        <name>Mn(2+)</name>
        <dbReference type="ChEBI" id="CHEBI:29035"/>
        <label>1</label>
    </ligand>
</feature>
<protein>
    <recommendedName>
        <fullName evidence="2">Polymerase acidic protein</fullName>
        <ecNumber evidence="2">3.1.-.-</ecNumber>
    </recommendedName>
    <alternativeName>
        <fullName evidence="2">RNA-directed RNA polymerase subunit P2</fullName>
    </alternativeName>
</protein>
<organism>
    <name type="scientific">Influenza A virus (strain A/USA:Huston/AA/1945 H1N1)</name>
    <dbReference type="NCBI Taxonomy" id="425551"/>
    <lineage>
        <taxon>Viruses</taxon>
        <taxon>Riboviria</taxon>
        <taxon>Orthornavirae</taxon>
        <taxon>Negarnaviricota</taxon>
        <taxon>Polyploviricotina</taxon>
        <taxon>Insthoviricetes</taxon>
        <taxon>Articulavirales</taxon>
        <taxon>Orthomyxoviridae</taxon>
        <taxon>Alphainfluenzavirus</taxon>
        <taxon>Alphainfluenzavirus influenzae</taxon>
        <taxon>Influenza A virus</taxon>
    </lineage>
</organism>
<sequence length="716" mass="82663">MEDFVRQCFNPMIVELAEKAMKEYGEDLKVETNKFAAICTHLEVCFMYSDFHFINEQGESIIVELGDPNALLKHRFEIIEGRDRTMAWTIVNSICNTTGAEKPKFLPDLYDYKENRFIEIGVTRREVHIYYLEKANKIKSEKTHIHIFSFTGEEMATKADYTLDEESRARIKTRLFTIRQEMASRGLWDSFRQSERGEETIEERFEITGTMRKLADQSLPPNFSCFENFRAYVDGFEPNGYIEGKLSQMSKEVNARIEPFLKTTPRPLKLPDGPPCSQRSKFLLMDALKLSIEDPSHEGEGIPLYDAIKCMRTFFGWKEPNVVKPHEKGINPNYLLSWKQVLAELQDIENEEKIPKTKNMKKTSQLKWALGENMAPEKVDFDDCKDVSDLKQYDSDEPELRSLSSWIQNEFNKACELTDSIWIELDEIGEDVAPIEHIASMRRNYFTAEVSHCRATEYIMKGVYINTALLNASCAAMDDFQLIPMISKCRTKEGRRKTNLYGFIIKGRSHLRNDTDVVNFVSMEFSLTDPRLEPHKWEKYCVLEIGDMLLRSAIGQVSRPMFLYVRTNGTSKIKMKWGMEMRRCLLQSLQQIESMIEAESSVKEKDMTKEFFENKSETWPIGESPKGVEEGSIGKVCRTLLAKSVFNSLYASPQLEGFSAESRKLLLIVQALRDNLEPGTFDLGGLYEAVEECLINDPWVLLNASWFNSFLTHALR</sequence>
<comment type="function">
    <text evidence="2">Plays an essential role in viral RNA transcription and replication by forming the heterotrimeric polymerase complex together with PB1 and PB2 subunits. The complex transcribes viral mRNAs by using a unique mechanism called cap-snatching. It consists in the hijacking and cleavage of host capped pre-mRNAs. These short capped RNAs are then used as primers for viral mRNAs. The PB2 subunit is responsible for the binding of the 5' cap of cellular pre-mRNAs which are subsequently cleaved after 10-13 nucleotides by the PA subunit that carries the endonuclease activity.</text>
</comment>
<comment type="cofactor">
    <cofactor evidence="2">
        <name>Mn(2+)</name>
        <dbReference type="ChEBI" id="CHEBI:29035"/>
    </cofactor>
    <text evidence="2">Binds 2 manganese ions per subunit.</text>
</comment>
<comment type="subunit">
    <text evidence="1 2">Influenza RNA polymerase is composed of three subunits: PB1, PB2 and PA. Interacts (via C-terminus) with PB1 (via N-terminus).</text>
</comment>
<comment type="subcellular location">
    <subcellularLocation>
        <location evidence="2">Host cytoplasm</location>
    </subcellularLocation>
    <subcellularLocation>
        <location evidence="2">Host nucleus</location>
    </subcellularLocation>
    <text evidence="1 2">PB1 and PA are transported in the host nucleus as a complex.</text>
</comment>
<comment type="alternative products">
    <event type="ribosomal frameshifting"/>
    <isoform>
        <id>A4U6V9-1</id>
        <name>PA</name>
        <sequence type="displayed"/>
    </isoform>
    <isoform>
        <id>P0DJW2-1</id>
        <name>PA-X</name>
        <sequence type="external"/>
    </isoform>
</comment>
<comment type="PTM">
    <text evidence="1 2">Phosphorylated on serines and threonines by host kinases, including human casein kinase II.</text>
</comment>
<comment type="similarity">
    <text evidence="2">Belongs to the influenza viruses PA family.</text>
</comment>
<evidence type="ECO:0000250" key="1">
    <source>
        <dbReference type="UniProtKB" id="P03433"/>
    </source>
</evidence>
<evidence type="ECO:0000255" key="2">
    <source>
        <dbReference type="HAMAP-Rule" id="MF_04063"/>
    </source>
</evidence>
<proteinExistence type="inferred from homology"/>
<gene>
    <name evidence="2" type="primary">PA</name>
</gene>
<dbReference type="EC" id="3.1.-.-" evidence="2"/>
<dbReference type="EMBL" id="CY021714">
    <property type="protein sequence ID" value="ABP49334.1"/>
    <property type="molecule type" value="Viral_cRNA"/>
</dbReference>
<dbReference type="SMR" id="A4U6V9"/>
<dbReference type="MEROPS" id="S62.001"/>
<dbReference type="Proteomes" id="UP000008433">
    <property type="component" value="Genome"/>
</dbReference>
<dbReference type="GO" id="GO:0030430">
    <property type="term" value="C:host cell cytoplasm"/>
    <property type="evidence" value="ECO:0007669"/>
    <property type="project" value="UniProtKB-SubCell"/>
</dbReference>
<dbReference type="GO" id="GO:0042025">
    <property type="term" value="C:host cell nucleus"/>
    <property type="evidence" value="ECO:0007669"/>
    <property type="project" value="UniProtKB-SubCell"/>
</dbReference>
<dbReference type="GO" id="GO:0004519">
    <property type="term" value="F:endonuclease activity"/>
    <property type="evidence" value="ECO:0007669"/>
    <property type="project" value="UniProtKB-KW"/>
</dbReference>
<dbReference type="GO" id="GO:0046872">
    <property type="term" value="F:metal ion binding"/>
    <property type="evidence" value="ECO:0007669"/>
    <property type="project" value="UniProtKB-KW"/>
</dbReference>
<dbReference type="GO" id="GO:0003723">
    <property type="term" value="F:RNA binding"/>
    <property type="evidence" value="ECO:0007669"/>
    <property type="project" value="UniProtKB-UniRule"/>
</dbReference>
<dbReference type="GO" id="GO:0075526">
    <property type="term" value="P:cap snatching"/>
    <property type="evidence" value="ECO:0007669"/>
    <property type="project" value="UniProtKB-UniRule"/>
</dbReference>
<dbReference type="GO" id="GO:0006351">
    <property type="term" value="P:DNA-templated transcription"/>
    <property type="evidence" value="ECO:0007669"/>
    <property type="project" value="UniProtKB-UniRule"/>
</dbReference>
<dbReference type="GO" id="GO:0039657">
    <property type="term" value="P:symbiont-mediated suppression of host gene expression"/>
    <property type="evidence" value="ECO:0007669"/>
    <property type="project" value="UniProtKB-KW"/>
</dbReference>
<dbReference type="GO" id="GO:0039523">
    <property type="term" value="P:symbiont-mediated suppression of host mRNA transcription via inhibition of RNA polymerase II activity"/>
    <property type="evidence" value="ECO:0007669"/>
    <property type="project" value="UniProtKB-UniRule"/>
</dbReference>
<dbReference type="GO" id="GO:0039694">
    <property type="term" value="P:viral RNA genome replication"/>
    <property type="evidence" value="ECO:0007669"/>
    <property type="project" value="InterPro"/>
</dbReference>
<dbReference type="GO" id="GO:0075523">
    <property type="term" value="P:viral translational frameshifting"/>
    <property type="evidence" value="ECO:0007669"/>
    <property type="project" value="UniProtKB-KW"/>
</dbReference>
<dbReference type="FunFam" id="3.40.91.90:FF:000001">
    <property type="entry name" value="Polymerase acidic protein"/>
    <property type="match status" value="1"/>
</dbReference>
<dbReference type="Gene3D" id="3.40.91.90">
    <property type="entry name" value="Influenza RNA-dependent RNA polymerase subunit PA, endonuclease domain"/>
    <property type="match status" value="1"/>
</dbReference>
<dbReference type="HAMAP" id="MF_04063">
    <property type="entry name" value="INFV_PA"/>
    <property type="match status" value="1"/>
</dbReference>
<dbReference type="InterPro" id="IPR037534">
    <property type="entry name" value="INFV_PA"/>
</dbReference>
<dbReference type="InterPro" id="IPR001009">
    <property type="entry name" value="PA/PA-X"/>
</dbReference>
<dbReference type="InterPro" id="IPR038372">
    <property type="entry name" value="PA/PA-X_sf"/>
</dbReference>
<dbReference type="Pfam" id="PF00603">
    <property type="entry name" value="Flu_PA"/>
    <property type="match status" value="1"/>
</dbReference>
<accession>A4U6V9</accession>
<organismHost>
    <name type="scientific">Aves</name>
    <dbReference type="NCBI Taxonomy" id="8782"/>
</organismHost>
<organismHost>
    <name type="scientific">Homo sapiens</name>
    <name type="common">Human</name>
    <dbReference type="NCBI Taxonomy" id="9606"/>
</organismHost>
<organismHost>
    <name type="scientific">Sus scrofa</name>
    <name type="common">Pig</name>
    <dbReference type="NCBI Taxonomy" id="9823"/>
</organismHost>
<name>PA_I45A0</name>
<keyword id="KW-1157">Cap snatching</keyword>
<keyword id="KW-0255">Endonuclease</keyword>
<keyword id="KW-1262">Eukaryotic host gene expression shutoff by virus</keyword>
<keyword id="KW-1191">Eukaryotic host transcription shutoff by virus</keyword>
<keyword id="KW-1035">Host cytoplasm</keyword>
<keyword id="KW-1190">Host gene expression shutoff by virus</keyword>
<keyword id="KW-1048">Host nucleus</keyword>
<keyword id="KW-0945">Host-virus interaction</keyword>
<keyword id="KW-0378">Hydrolase</keyword>
<keyword id="KW-1104">Inhibition of host RNA polymerase II by virus</keyword>
<keyword id="KW-0464">Manganese</keyword>
<keyword id="KW-0479">Metal-binding</keyword>
<keyword id="KW-0540">Nuclease</keyword>
<keyword id="KW-0597">Phosphoprotein</keyword>
<keyword id="KW-0688">Ribosomal frameshifting</keyword>
<reference key="1">
    <citation type="submission" date="2007-04" db="EMBL/GenBank/DDBJ databases">
        <title>The NIAID influenza genome sequencing project.</title>
        <authorList>
            <person name="Ghedin E."/>
            <person name="Spiro D."/>
            <person name="Miller N."/>
            <person name="Zaborsky J."/>
            <person name="Feldblyum T."/>
            <person name="Subbu V."/>
            <person name="Shumway M."/>
            <person name="Sparenborg J."/>
            <person name="Groveman L."/>
            <person name="Halpin R."/>
            <person name="Sitz J."/>
            <person name="Koo H."/>
            <person name="Salzberg S.L."/>
            <person name="Webster R.G."/>
            <person name="Hoffmann E."/>
            <person name="Krauss S."/>
            <person name="Naeve C."/>
            <person name="Bao Y."/>
            <person name="Bolotov P."/>
            <person name="Dernovoy D."/>
            <person name="Kiryutin B."/>
            <person name="Lipman D.J."/>
            <person name="Tatusova T."/>
        </authorList>
    </citation>
    <scope>NUCLEOTIDE SEQUENCE [GENOMIC RNA]</scope>
</reference>
<reference key="2">
    <citation type="submission" date="2007-04" db="EMBL/GenBank/DDBJ databases">
        <authorList>
            <consortium name="The NIAID Influenza Genome Sequencing Consortium"/>
        </authorList>
    </citation>
    <scope>NUCLEOTIDE SEQUENCE [GENOMIC RNA]</scope>
</reference>